<organism>
    <name type="scientific">Nicotiana tomentosiformis</name>
    <name type="common">Tobacco</name>
    <dbReference type="NCBI Taxonomy" id="4098"/>
    <lineage>
        <taxon>Eukaryota</taxon>
        <taxon>Viridiplantae</taxon>
        <taxon>Streptophyta</taxon>
        <taxon>Embryophyta</taxon>
        <taxon>Tracheophyta</taxon>
        <taxon>Spermatophyta</taxon>
        <taxon>Magnoliopsida</taxon>
        <taxon>eudicotyledons</taxon>
        <taxon>Gunneridae</taxon>
        <taxon>Pentapetalae</taxon>
        <taxon>asterids</taxon>
        <taxon>lamiids</taxon>
        <taxon>Solanales</taxon>
        <taxon>Solanaceae</taxon>
        <taxon>Nicotianoideae</taxon>
        <taxon>Nicotianeae</taxon>
        <taxon>Nicotiana</taxon>
    </lineage>
</organism>
<dbReference type="EMBL" id="AB240139">
    <property type="protein sequence ID" value="BAE47985.1"/>
    <property type="molecule type" value="Genomic_DNA"/>
</dbReference>
<dbReference type="RefSeq" id="YP_398847.1">
    <property type="nucleotide sequence ID" value="NC_007602.1"/>
</dbReference>
<dbReference type="SMR" id="Q33C50"/>
<dbReference type="GeneID" id="3776342"/>
<dbReference type="KEGG" id="nto:3776342"/>
<dbReference type="OrthoDB" id="2303at2759"/>
<dbReference type="GO" id="GO:0009535">
    <property type="term" value="C:chloroplast thylakoid membrane"/>
    <property type="evidence" value="ECO:0007669"/>
    <property type="project" value="UniProtKB-SubCell"/>
</dbReference>
<dbReference type="GO" id="GO:0005886">
    <property type="term" value="C:plasma membrane"/>
    <property type="evidence" value="ECO:0007669"/>
    <property type="project" value="UniProtKB-UniRule"/>
</dbReference>
<dbReference type="GO" id="GO:0045259">
    <property type="term" value="C:proton-transporting ATP synthase complex"/>
    <property type="evidence" value="ECO:0007669"/>
    <property type="project" value="UniProtKB-KW"/>
</dbReference>
<dbReference type="GO" id="GO:0046933">
    <property type="term" value="F:proton-transporting ATP synthase activity, rotational mechanism"/>
    <property type="evidence" value="ECO:0007669"/>
    <property type="project" value="UniProtKB-UniRule"/>
</dbReference>
<dbReference type="CDD" id="cd00310">
    <property type="entry name" value="ATP-synt_Fo_a_6"/>
    <property type="match status" value="1"/>
</dbReference>
<dbReference type="FunFam" id="1.20.120.220:FF:000001">
    <property type="entry name" value="ATP synthase subunit a, chloroplastic"/>
    <property type="match status" value="1"/>
</dbReference>
<dbReference type="Gene3D" id="1.20.120.220">
    <property type="entry name" value="ATP synthase, F0 complex, subunit A"/>
    <property type="match status" value="1"/>
</dbReference>
<dbReference type="HAMAP" id="MF_01393">
    <property type="entry name" value="ATP_synth_a_bact"/>
    <property type="match status" value="1"/>
</dbReference>
<dbReference type="InterPro" id="IPR045082">
    <property type="entry name" value="ATP_syn_F0_a_bact/chloroplast"/>
</dbReference>
<dbReference type="InterPro" id="IPR000568">
    <property type="entry name" value="ATP_synth_F0_asu"/>
</dbReference>
<dbReference type="InterPro" id="IPR023011">
    <property type="entry name" value="ATP_synth_F0_asu_AS"/>
</dbReference>
<dbReference type="InterPro" id="IPR035908">
    <property type="entry name" value="F0_ATP_A_sf"/>
</dbReference>
<dbReference type="NCBIfam" id="TIGR01131">
    <property type="entry name" value="ATP_synt_6_or_A"/>
    <property type="match status" value="1"/>
</dbReference>
<dbReference type="PANTHER" id="PTHR42823">
    <property type="entry name" value="ATP SYNTHASE SUBUNIT A, CHLOROPLASTIC"/>
    <property type="match status" value="1"/>
</dbReference>
<dbReference type="PANTHER" id="PTHR42823:SF3">
    <property type="entry name" value="ATP SYNTHASE SUBUNIT A, CHLOROPLASTIC"/>
    <property type="match status" value="1"/>
</dbReference>
<dbReference type="Pfam" id="PF00119">
    <property type="entry name" value="ATP-synt_A"/>
    <property type="match status" value="1"/>
</dbReference>
<dbReference type="PRINTS" id="PR00123">
    <property type="entry name" value="ATPASEA"/>
</dbReference>
<dbReference type="SUPFAM" id="SSF81336">
    <property type="entry name" value="F1F0 ATP synthase subunit A"/>
    <property type="match status" value="1"/>
</dbReference>
<dbReference type="PROSITE" id="PS00449">
    <property type="entry name" value="ATPASE_A"/>
    <property type="match status" value="1"/>
</dbReference>
<feature type="chain" id="PRO_0000362576" description="ATP synthase subunit a, chloroplastic">
    <location>
        <begin position="1"/>
        <end position="247"/>
    </location>
</feature>
<feature type="transmembrane region" description="Helical" evidence="1">
    <location>
        <begin position="38"/>
        <end position="58"/>
    </location>
</feature>
<feature type="transmembrane region" description="Helical" evidence="1">
    <location>
        <begin position="95"/>
        <end position="115"/>
    </location>
</feature>
<feature type="transmembrane region" description="Helical" evidence="1">
    <location>
        <begin position="134"/>
        <end position="154"/>
    </location>
</feature>
<feature type="transmembrane region" description="Helical" evidence="1">
    <location>
        <begin position="199"/>
        <end position="219"/>
    </location>
</feature>
<feature type="transmembrane region" description="Helical" evidence="1">
    <location>
        <begin position="220"/>
        <end position="240"/>
    </location>
</feature>
<gene>
    <name evidence="1" type="primary">atpI</name>
</gene>
<geneLocation type="chloroplast"/>
<accession>Q33C50</accession>
<sequence length="247" mass="27003">MNVLSCSINTLKGLYDISGVEVGQHFYWQIGGFQVHGQVLITSWVVIAILLGSATIAVRNPQTIPTGGQNFFEYVLEFIRDVSKTQIGEEYGPWVPFIGTMFLFIFVSNWSGALLPWKIIQLPHGELAAPTNDINTTVALALLTSVAYFYAGLTKKGLGYFGKYIQPTPILLPINILEDFTKPLSLSFRLFGNILADELVVVVLVSLVPLVVPIPVMLLGLFTSGIQALIFATLAAAYIGESMEGHH</sequence>
<reference key="1">
    <citation type="journal article" date="2006" name="Mol. Genet. Genomics">
        <title>The chloroplast genome of Nicotiana sylvestris and Nicotiana tomentosiformis: complete sequencing confirms that the Nicotiana sylvestris progenitor is the maternal genome donor of Nicotiana tabacum.</title>
        <authorList>
            <person name="Yukawa M."/>
            <person name="Tsudzuki T."/>
            <person name="Sugiura M."/>
        </authorList>
    </citation>
    <scope>NUCLEOTIDE SEQUENCE [LARGE SCALE GENOMIC DNA]</scope>
</reference>
<proteinExistence type="inferred from homology"/>
<comment type="function">
    <text evidence="1">Key component of the proton channel; it plays a direct role in the translocation of protons across the membrane.</text>
</comment>
<comment type="subunit">
    <text evidence="1">F-type ATPases have 2 components, CF(1) - the catalytic core - and CF(0) - the membrane proton channel. CF(1) has five subunits: alpha(3), beta(3), gamma(1), delta(1), epsilon(1). CF(0) has four main subunits: a, b, b' and c.</text>
</comment>
<comment type="subcellular location">
    <subcellularLocation>
        <location evidence="1">Plastid</location>
        <location evidence="1">Chloroplast thylakoid membrane</location>
        <topology evidence="1">Multi-pass membrane protein</topology>
    </subcellularLocation>
</comment>
<comment type="similarity">
    <text evidence="1">Belongs to the ATPase A chain family.</text>
</comment>
<evidence type="ECO:0000255" key="1">
    <source>
        <dbReference type="HAMAP-Rule" id="MF_01393"/>
    </source>
</evidence>
<keyword id="KW-0066">ATP synthesis</keyword>
<keyword id="KW-0138">CF(0)</keyword>
<keyword id="KW-0150">Chloroplast</keyword>
<keyword id="KW-0375">Hydrogen ion transport</keyword>
<keyword id="KW-0406">Ion transport</keyword>
<keyword id="KW-0472">Membrane</keyword>
<keyword id="KW-0934">Plastid</keyword>
<keyword id="KW-0793">Thylakoid</keyword>
<keyword id="KW-0812">Transmembrane</keyword>
<keyword id="KW-1133">Transmembrane helix</keyword>
<keyword id="KW-0813">Transport</keyword>
<protein>
    <recommendedName>
        <fullName evidence="1">ATP synthase subunit a, chloroplastic</fullName>
    </recommendedName>
    <alternativeName>
        <fullName evidence="1">ATP synthase F0 sector subunit a</fullName>
    </alternativeName>
    <alternativeName>
        <fullName evidence="1">F-ATPase subunit IV</fullName>
    </alternativeName>
</protein>
<name>ATPI_NICTO</name>